<feature type="chain" id="PRO_0000082211" description="Taste receptor type 2 member 5">
    <location>
        <begin position="1"/>
        <end position="299"/>
    </location>
</feature>
<feature type="topological domain" description="Extracellular" evidence="2">
    <location>
        <position position="1"/>
    </location>
</feature>
<feature type="transmembrane region" description="Helical; Name=1" evidence="2">
    <location>
        <begin position="2"/>
        <end position="22"/>
    </location>
</feature>
<feature type="topological domain" description="Cytoplasmic" evidence="2">
    <location>
        <begin position="23"/>
        <end position="45"/>
    </location>
</feature>
<feature type="transmembrane region" description="Helical; Name=2" evidence="2">
    <location>
        <begin position="46"/>
        <end position="66"/>
    </location>
</feature>
<feature type="topological domain" description="Extracellular" evidence="2">
    <location>
        <begin position="67"/>
        <end position="82"/>
    </location>
</feature>
<feature type="transmembrane region" description="Helical; Name=3" evidence="2">
    <location>
        <begin position="83"/>
        <end position="103"/>
    </location>
</feature>
<feature type="topological domain" description="Cytoplasmic" evidence="2">
    <location>
        <begin position="104"/>
        <end position="127"/>
    </location>
</feature>
<feature type="transmembrane region" description="Helical; Name=4" evidence="2">
    <location>
        <begin position="128"/>
        <end position="148"/>
    </location>
</feature>
<feature type="topological domain" description="Extracellular" evidence="2">
    <location>
        <begin position="149"/>
        <end position="175"/>
    </location>
</feature>
<feature type="transmembrane region" description="Helical; Name=5" evidence="2">
    <location>
        <begin position="176"/>
        <end position="196"/>
    </location>
</feature>
<feature type="topological domain" description="Cytoplasmic" evidence="2">
    <location>
        <begin position="197"/>
        <end position="223"/>
    </location>
</feature>
<feature type="transmembrane region" description="Helical; Name=6" evidence="2">
    <location>
        <begin position="224"/>
        <end position="244"/>
    </location>
</feature>
<feature type="topological domain" description="Extracellular" evidence="2">
    <location>
        <begin position="245"/>
        <end position="253"/>
    </location>
</feature>
<feature type="transmembrane region" description="Helical; Name=7" evidence="2">
    <location>
        <begin position="254"/>
        <end position="274"/>
    </location>
</feature>
<feature type="topological domain" description="Cytoplasmic" evidence="2">
    <location>
        <begin position="275"/>
        <end position="299"/>
    </location>
</feature>
<feature type="glycosylation site" description="N-linked (GlcNAc...) asparagine" evidence="2">
    <location>
        <position position="155"/>
    </location>
</feature>
<protein>
    <recommendedName>
        <fullName>Taste receptor type 2 member 5</fullName>
        <shortName>T2R5</shortName>
    </recommendedName>
</protein>
<name>TA2R5_GORGO</name>
<accession>Q645Z1</accession>
<sequence>MLSAGLGLLMLVAVVEFLIGLIGNGVLVVWSFREWMRKFNWSSYNLIILGLAGCRFLLQWLIILDLSLFPLFQSSRWLRYLSIFWVLVSQASLWFATFLSVFYCKKITTFDRPAYLWLKQRAYNLSLWCLLGYFIINLLLTVQIGLMFYHPPQGNSSIRYPFESWQYLYAFRLNSGSYLPLMVFLVSSGMLIVSLYTHHKKMKVHSAGRRDVRAKAHITALKSLGCFLFLHLVYIMASPFSITSKTYPPDLTSVFIWETLMAAYPSLHSLILIMGIPRVKQTCQKILWKTVCARRCWGP</sequence>
<keyword id="KW-0297">G-protein coupled receptor</keyword>
<keyword id="KW-0325">Glycoprotein</keyword>
<keyword id="KW-0472">Membrane</keyword>
<keyword id="KW-0675">Receptor</keyword>
<keyword id="KW-1185">Reference proteome</keyword>
<keyword id="KW-0716">Sensory transduction</keyword>
<keyword id="KW-0919">Taste</keyword>
<keyword id="KW-0807">Transducer</keyword>
<keyword id="KW-0812">Transmembrane</keyword>
<keyword id="KW-1133">Transmembrane helix</keyword>
<reference key="1">
    <citation type="journal article" date="2005" name="Mol. Biol. Evol.">
        <title>Evolution of bitter taste receptors in humans and apes.</title>
        <authorList>
            <person name="Fischer A."/>
            <person name="Gilad Y."/>
            <person name="Man O."/>
            <person name="Paeaebo S."/>
        </authorList>
    </citation>
    <scope>NUCLEOTIDE SEQUENCE [GENOMIC DNA]</scope>
</reference>
<proteinExistence type="inferred from homology"/>
<gene>
    <name type="primary">TAS2R5</name>
</gene>
<dbReference type="EMBL" id="AY724922">
    <property type="protein sequence ID" value="AAU21128.1"/>
    <property type="molecule type" value="Genomic_DNA"/>
</dbReference>
<dbReference type="SMR" id="Q645Z1"/>
<dbReference type="FunCoup" id="Q645Z1">
    <property type="interactions" value="179"/>
</dbReference>
<dbReference type="STRING" id="9593.ENSGGOP00000009394"/>
<dbReference type="GlyCosmos" id="Q645Z1">
    <property type="glycosylation" value="1 site, No reported glycans"/>
</dbReference>
<dbReference type="Ensembl" id="ENSGGOT00000009658.3">
    <property type="protein sequence ID" value="ENSGGOP00000009394.2"/>
    <property type="gene ID" value="ENSGGOG00000009622.3"/>
</dbReference>
<dbReference type="eggNOG" id="ENOG502S2SI">
    <property type="taxonomic scope" value="Eukaryota"/>
</dbReference>
<dbReference type="GeneTree" id="ENSGT01100000263477"/>
<dbReference type="HOGENOM" id="CLU_072337_1_1_1"/>
<dbReference type="InParanoid" id="Q645Z1"/>
<dbReference type="OMA" id="CRFLLQW"/>
<dbReference type="Proteomes" id="UP000001519">
    <property type="component" value="Chromosome 7"/>
</dbReference>
<dbReference type="Bgee" id="ENSGGOG00000009622">
    <property type="expression patterns" value="Expressed in cerebellum and 6 other cell types or tissues"/>
</dbReference>
<dbReference type="GO" id="GO:0016020">
    <property type="term" value="C:membrane"/>
    <property type="evidence" value="ECO:0000318"/>
    <property type="project" value="GO_Central"/>
</dbReference>
<dbReference type="GO" id="GO:0005886">
    <property type="term" value="C:plasma membrane"/>
    <property type="evidence" value="ECO:0007669"/>
    <property type="project" value="UniProtKB-ARBA"/>
</dbReference>
<dbReference type="GO" id="GO:0033038">
    <property type="term" value="F:bitter taste receptor activity"/>
    <property type="evidence" value="ECO:0000318"/>
    <property type="project" value="GO_Central"/>
</dbReference>
<dbReference type="GO" id="GO:0004930">
    <property type="term" value="F:G protein-coupled receptor activity"/>
    <property type="evidence" value="ECO:0007669"/>
    <property type="project" value="UniProtKB-KW"/>
</dbReference>
<dbReference type="GO" id="GO:0001580">
    <property type="term" value="P:detection of chemical stimulus involved in sensory perception of bitter taste"/>
    <property type="evidence" value="ECO:0000318"/>
    <property type="project" value="GO_Central"/>
</dbReference>
<dbReference type="CDD" id="cd13950">
    <property type="entry name" value="7tm_TAS2R"/>
    <property type="match status" value="1"/>
</dbReference>
<dbReference type="FunFam" id="1.20.1070.10:FF:000055">
    <property type="entry name" value="Taste receptor type 2"/>
    <property type="match status" value="1"/>
</dbReference>
<dbReference type="Gene3D" id="1.20.1070.10">
    <property type="entry name" value="Rhodopsin 7-helix transmembrane proteins"/>
    <property type="match status" value="1"/>
</dbReference>
<dbReference type="InterPro" id="IPR007960">
    <property type="entry name" value="TAS2R"/>
</dbReference>
<dbReference type="PANTHER" id="PTHR11394">
    <property type="entry name" value="TASTE RECEPTOR TYPE 2"/>
    <property type="match status" value="1"/>
</dbReference>
<dbReference type="PANTHER" id="PTHR11394:SF8">
    <property type="entry name" value="TASTE RECEPTOR TYPE 2 MEMBER 5"/>
    <property type="match status" value="1"/>
</dbReference>
<dbReference type="Pfam" id="PF05296">
    <property type="entry name" value="TAS2R"/>
    <property type="match status" value="1"/>
</dbReference>
<dbReference type="SUPFAM" id="SSF81321">
    <property type="entry name" value="Family A G protein-coupled receptor-like"/>
    <property type="match status" value="1"/>
</dbReference>
<evidence type="ECO:0000250" key="1"/>
<evidence type="ECO:0000255" key="2"/>
<evidence type="ECO:0000305" key="3"/>
<comment type="function">
    <text evidence="1">Receptor that may play a role in the perception of bitterness and is gustducin-linked. May play a role in sensing the chemical composition of the gastrointestinal content. The activity of this receptor may stimulate alpha gustducin, mediate PLC-beta-2 activation and lead to the gating of TRPM5 (By similarity).</text>
</comment>
<comment type="subcellular location">
    <subcellularLocation>
        <location>Membrane</location>
        <topology>Multi-pass membrane protein</topology>
    </subcellularLocation>
</comment>
<comment type="miscellaneous">
    <text>Most taste cells may be activated by a limited number of bitter compounds; individual taste cells can discriminate among bitter stimuli.</text>
</comment>
<comment type="similarity">
    <text evidence="3">Belongs to the G-protein coupled receptor T2R family.</text>
</comment>
<organism>
    <name type="scientific">Gorilla gorilla gorilla</name>
    <name type="common">Western lowland gorilla</name>
    <dbReference type="NCBI Taxonomy" id="9595"/>
    <lineage>
        <taxon>Eukaryota</taxon>
        <taxon>Metazoa</taxon>
        <taxon>Chordata</taxon>
        <taxon>Craniata</taxon>
        <taxon>Vertebrata</taxon>
        <taxon>Euteleostomi</taxon>
        <taxon>Mammalia</taxon>
        <taxon>Eutheria</taxon>
        <taxon>Euarchontoglires</taxon>
        <taxon>Primates</taxon>
        <taxon>Haplorrhini</taxon>
        <taxon>Catarrhini</taxon>
        <taxon>Hominidae</taxon>
        <taxon>Gorilla</taxon>
    </lineage>
</organism>